<keyword id="KW-0479">Metal-binding</keyword>
<keyword id="KW-0520">NAD</keyword>
<keyword id="KW-0521">NADP</keyword>
<keyword id="KW-0558">Oxidation</keyword>
<keyword id="KW-0560">Oxidoreductase</keyword>
<keyword id="KW-0630">Potassium</keyword>
<keyword id="KW-1185">Reference proteome</keyword>
<feature type="chain" id="PRO_0000056559" description="Betaine aldehyde dehydrogenase">
    <location>
        <begin position="1"/>
        <end position="490"/>
    </location>
</feature>
<feature type="active site" description="Charge relay system" evidence="1">
    <location>
        <position position="162"/>
    </location>
</feature>
<feature type="active site" description="Proton acceptor" evidence="1">
    <location>
        <position position="252"/>
    </location>
</feature>
<feature type="active site" description="Nucleophile" evidence="1">
    <location>
        <position position="286"/>
    </location>
</feature>
<feature type="active site" description="Charge relay system" evidence="1">
    <location>
        <position position="464"/>
    </location>
</feature>
<feature type="binding site" evidence="1">
    <location>
        <position position="93"/>
    </location>
    <ligand>
        <name>K(+)</name>
        <dbReference type="ChEBI" id="CHEBI:29103"/>
        <label>1</label>
    </ligand>
</feature>
<feature type="binding site" evidence="1">
    <location>
        <begin position="150"/>
        <end position="152"/>
    </location>
    <ligand>
        <name>NAD(+)</name>
        <dbReference type="ChEBI" id="CHEBI:57540"/>
    </ligand>
</feature>
<feature type="binding site" evidence="1">
    <location>
        <begin position="176"/>
        <end position="179"/>
    </location>
    <ligand>
        <name>NAD(+)</name>
        <dbReference type="ChEBI" id="CHEBI:57540"/>
    </ligand>
</feature>
<feature type="binding site" evidence="1">
    <location>
        <position position="180"/>
    </location>
    <ligand>
        <name>K(+)</name>
        <dbReference type="ChEBI" id="CHEBI:29103"/>
        <label>1</label>
    </ligand>
</feature>
<feature type="binding site" evidence="1">
    <location>
        <begin position="230"/>
        <end position="233"/>
    </location>
    <ligand>
        <name>NAD(+)</name>
        <dbReference type="ChEBI" id="CHEBI:57540"/>
    </ligand>
</feature>
<feature type="binding site" evidence="1">
    <location>
        <position position="246"/>
    </location>
    <ligand>
        <name>K(+)</name>
        <dbReference type="ChEBI" id="CHEBI:29103"/>
        <label>2</label>
    </ligand>
</feature>
<feature type="binding site" evidence="1">
    <location>
        <position position="254"/>
    </location>
    <ligand>
        <name>NAD(+)</name>
        <dbReference type="ChEBI" id="CHEBI:57540"/>
    </ligand>
</feature>
<feature type="binding site" description="covalent" evidence="1">
    <location>
        <position position="286"/>
    </location>
    <ligand>
        <name>NAD(+)</name>
        <dbReference type="ChEBI" id="CHEBI:57540"/>
    </ligand>
</feature>
<feature type="binding site" evidence="1">
    <location>
        <position position="387"/>
    </location>
    <ligand>
        <name>NAD(+)</name>
        <dbReference type="ChEBI" id="CHEBI:57540"/>
    </ligand>
</feature>
<feature type="binding site" evidence="1">
    <location>
        <position position="457"/>
    </location>
    <ligand>
        <name>K(+)</name>
        <dbReference type="ChEBI" id="CHEBI:29103"/>
        <label>2</label>
    </ligand>
</feature>
<feature type="binding site" evidence="1">
    <location>
        <position position="460"/>
    </location>
    <ligand>
        <name>K(+)</name>
        <dbReference type="ChEBI" id="CHEBI:29103"/>
        <label>2</label>
    </ligand>
</feature>
<feature type="site" description="Seems to be a necessary countercharge to the potassium cations" evidence="1">
    <location>
        <position position="248"/>
    </location>
</feature>
<feature type="modified residue" description="Cysteine sulfenic acid (-SOH)" evidence="1">
    <location>
        <position position="286"/>
    </location>
</feature>
<accession>Q8P5D8</accession>
<reference key="1">
    <citation type="journal article" date="2002" name="Nature">
        <title>Comparison of the genomes of two Xanthomonas pathogens with differing host specificities.</title>
        <authorList>
            <person name="da Silva A.C.R."/>
            <person name="Ferro J.A."/>
            <person name="Reinach F.C."/>
            <person name="Farah C.S."/>
            <person name="Furlan L.R."/>
            <person name="Quaggio R.B."/>
            <person name="Monteiro-Vitorello C.B."/>
            <person name="Van Sluys M.A."/>
            <person name="Almeida N.F. Jr."/>
            <person name="Alves L.M.C."/>
            <person name="do Amaral A.M."/>
            <person name="Bertolini M.C."/>
            <person name="Camargo L.E.A."/>
            <person name="Camarotte G."/>
            <person name="Cannavan F."/>
            <person name="Cardozo J."/>
            <person name="Chambergo F."/>
            <person name="Ciapina L.P."/>
            <person name="Cicarelli R.M.B."/>
            <person name="Coutinho L.L."/>
            <person name="Cursino-Santos J.R."/>
            <person name="El-Dorry H."/>
            <person name="Faria J.B."/>
            <person name="Ferreira A.J.S."/>
            <person name="Ferreira R.C.C."/>
            <person name="Ferro M.I.T."/>
            <person name="Formighieri E.F."/>
            <person name="Franco M.C."/>
            <person name="Greggio C.C."/>
            <person name="Gruber A."/>
            <person name="Katsuyama A.M."/>
            <person name="Kishi L.T."/>
            <person name="Leite R.P."/>
            <person name="Lemos E.G.M."/>
            <person name="Lemos M.V.F."/>
            <person name="Locali E.C."/>
            <person name="Machado M.A."/>
            <person name="Madeira A.M.B.N."/>
            <person name="Martinez-Rossi N.M."/>
            <person name="Martins E.C."/>
            <person name="Meidanis J."/>
            <person name="Menck C.F.M."/>
            <person name="Miyaki C.Y."/>
            <person name="Moon D.H."/>
            <person name="Moreira L.M."/>
            <person name="Novo M.T.M."/>
            <person name="Okura V.K."/>
            <person name="Oliveira M.C."/>
            <person name="Oliveira V.R."/>
            <person name="Pereira H.A."/>
            <person name="Rossi A."/>
            <person name="Sena J.A.D."/>
            <person name="Silva C."/>
            <person name="de Souza R.F."/>
            <person name="Spinola L.A.F."/>
            <person name="Takita M.A."/>
            <person name="Tamura R.E."/>
            <person name="Teixeira E.C."/>
            <person name="Tezza R.I.D."/>
            <person name="Trindade dos Santos M."/>
            <person name="Truffi D."/>
            <person name="Tsai S.M."/>
            <person name="White F.F."/>
            <person name="Setubal J.C."/>
            <person name="Kitajima J.P."/>
        </authorList>
    </citation>
    <scope>NUCLEOTIDE SEQUENCE [LARGE SCALE GENOMIC DNA]</scope>
    <source>
        <strain>ATCC 33913 / DSM 3586 / NCPPB 528 / LMG 568 / P 25</strain>
    </source>
</reference>
<name>BETB_XANCP</name>
<evidence type="ECO:0000255" key="1">
    <source>
        <dbReference type="HAMAP-Rule" id="MF_00804"/>
    </source>
</evidence>
<proteinExistence type="inferred from homology"/>
<protein>
    <recommendedName>
        <fullName evidence="1">Betaine aldehyde dehydrogenase</fullName>
        <shortName evidence="1">BADH</shortName>
        <ecNumber evidence="1">1.2.1.8</ecNumber>
    </recommendedName>
</protein>
<gene>
    <name evidence="1" type="primary">betB</name>
    <name type="ordered locus">XCC3403</name>
</gene>
<sequence length="490" mass="52542">MPRFPDQLLYIGGRYVPARGGHTFEVVNPATGEVLANVHNADADDLDAAVDSAKAGQRHWAALTVVERSRILLRAVALLRERNDALAELETLNTGKPLSETRSVDIVTGADVLEYYAGVAQALQGVQVPLREGSFFYTRHEPLGVVGAIGAWNYPIQIALWKAAPALAAGNAMIFKPSEVTPLTALKLAEIFTEAGLPDGVFNVLPGDGASVGHALTEHPEIEKISFTGGTATGRKVMASASSSSLKDVTMELGGKSPLIVCADADLDLAADIAMMANFYSSGQVCTNGTRVFVPRALRTAFEARLLARVQRIHIGDPLDERTTFGPMVSAAHMQRVLEHIEQGKAEGARLLFGGERLRDGALAQGCYVAPTIFSDCTDVMTIVREEIFGPVLSLLTYDDEDEAITRANATSYGLAAGVVTPDLSRAHRLIHRLEAGICWINTWGESPAPMPVGGYKQSGVGRENGLATLQAYTRTKSVQVELERYASVF</sequence>
<organism>
    <name type="scientific">Xanthomonas campestris pv. campestris (strain ATCC 33913 / DSM 3586 / NCPPB 528 / LMG 568 / P 25)</name>
    <dbReference type="NCBI Taxonomy" id="190485"/>
    <lineage>
        <taxon>Bacteria</taxon>
        <taxon>Pseudomonadati</taxon>
        <taxon>Pseudomonadota</taxon>
        <taxon>Gammaproteobacteria</taxon>
        <taxon>Lysobacterales</taxon>
        <taxon>Lysobacteraceae</taxon>
        <taxon>Xanthomonas</taxon>
    </lineage>
</organism>
<dbReference type="EC" id="1.2.1.8" evidence="1"/>
<dbReference type="EMBL" id="AE008922">
    <property type="protein sequence ID" value="AAM42673.1"/>
    <property type="molecule type" value="Genomic_DNA"/>
</dbReference>
<dbReference type="RefSeq" id="NP_638749.1">
    <property type="nucleotide sequence ID" value="NC_003902.1"/>
</dbReference>
<dbReference type="RefSeq" id="WP_011038501.1">
    <property type="nucleotide sequence ID" value="NC_003902.1"/>
</dbReference>
<dbReference type="SMR" id="Q8P5D8"/>
<dbReference type="STRING" id="190485.XCC3403"/>
<dbReference type="EnsemblBacteria" id="AAM42673">
    <property type="protein sequence ID" value="AAM42673"/>
    <property type="gene ID" value="XCC3403"/>
</dbReference>
<dbReference type="KEGG" id="xcc:XCC3403"/>
<dbReference type="PATRIC" id="fig|190485.4.peg.3640"/>
<dbReference type="eggNOG" id="COG1012">
    <property type="taxonomic scope" value="Bacteria"/>
</dbReference>
<dbReference type="HOGENOM" id="CLU_005391_0_0_6"/>
<dbReference type="OrthoDB" id="9812625at2"/>
<dbReference type="UniPathway" id="UPA00529">
    <property type="reaction ID" value="UER00386"/>
</dbReference>
<dbReference type="Proteomes" id="UP000001010">
    <property type="component" value="Chromosome"/>
</dbReference>
<dbReference type="GO" id="GO:0008802">
    <property type="term" value="F:betaine-aldehyde dehydrogenase (NAD+) activity"/>
    <property type="evidence" value="ECO:0000318"/>
    <property type="project" value="GO_Central"/>
</dbReference>
<dbReference type="GO" id="GO:0046872">
    <property type="term" value="F:metal ion binding"/>
    <property type="evidence" value="ECO:0007669"/>
    <property type="project" value="UniProtKB-KW"/>
</dbReference>
<dbReference type="GO" id="GO:0019285">
    <property type="term" value="P:glycine betaine biosynthetic process from choline"/>
    <property type="evidence" value="ECO:0007669"/>
    <property type="project" value="UniProtKB-UniRule"/>
</dbReference>
<dbReference type="FunFam" id="3.40.309.10:FF:000014">
    <property type="entry name" value="NAD/NADP-dependent betaine aldehyde dehydrogenase"/>
    <property type="match status" value="1"/>
</dbReference>
<dbReference type="FunFam" id="3.40.605.10:FF:000007">
    <property type="entry name" value="NAD/NADP-dependent betaine aldehyde dehydrogenase"/>
    <property type="match status" value="1"/>
</dbReference>
<dbReference type="Gene3D" id="3.40.605.10">
    <property type="entry name" value="Aldehyde Dehydrogenase, Chain A, domain 1"/>
    <property type="match status" value="1"/>
</dbReference>
<dbReference type="Gene3D" id="3.40.309.10">
    <property type="entry name" value="Aldehyde Dehydrogenase, Chain A, domain 2"/>
    <property type="match status" value="1"/>
</dbReference>
<dbReference type="HAMAP" id="MF_00804">
    <property type="entry name" value="BADH"/>
    <property type="match status" value="1"/>
</dbReference>
<dbReference type="InterPro" id="IPR016161">
    <property type="entry name" value="Ald_DH/histidinol_DH"/>
</dbReference>
<dbReference type="InterPro" id="IPR016163">
    <property type="entry name" value="Ald_DH_C"/>
</dbReference>
<dbReference type="InterPro" id="IPR016160">
    <property type="entry name" value="Ald_DH_CS_CYS"/>
</dbReference>
<dbReference type="InterPro" id="IPR029510">
    <property type="entry name" value="Ald_DH_CS_GLU"/>
</dbReference>
<dbReference type="InterPro" id="IPR016162">
    <property type="entry name" value="Ald_DH_N"/>
</dbReference>
<dbReference type="InterPro" id="IPR015590">
    <property type="entry name" value="Aldehyde_DH_dom"/>
</dbReference>
<dbReference type="InterPro" id="IPR011264">
    <property type="entry name" value="BADH"/>
</dbReference>
<dbReference type="NCBIfam" id="TIGR01804">
    <property type="entry name" value="BADH"/>
    <property type="match status" value="1"/>
</dbReference>
<dbReference type="NCBIfam" id="NF009725">
    <property type="entry name" value="PRK13252.1"/>
    <property type="match status" value="1"/>
</dbReference>
<dbReference type="PANTHER" id="PTHR11699">
    <property type="entry name" value="ALDEHYDE DEHYDROGENASE-RELATED"/>
    <property type="match status" value="1"/>
</dbReference>
<dbReference type="Pfam" id="PF00171">
    <property type="entry name" value="Aldedh"/>
    <property type="match status" value="1"/>
</dbReference>
<dbReference type="SUPFAM" id="SSF53720">
    <property type="entry name" value="ALDH-like"/>
    <property type="match status" value="1"/>
</dbReference>
<dbReference type="PROSITE" id="PS00070">
    <property type="entry name" value="ALDEHYDE_DEHYDR_CYS"/>
    <property type="match status" value="1"/>
</dbReference>
<dbReference type="PROSITE" id="PS00687">
    <property type="entry name" value="ALDEHYDE_DEHYDR_GLU"/>
    <property type="match status" value="1"/>
</dbReference>
<comment type="function">
    <text evidence="1">Involved in the biosynthesis of the osmoprotectant glycine betaine. Catalyzes the irreversible oxidation of betaine aldehyde to the corresponding acid.</text>
</comment>
<comment type="catalytic activity">
    <reaction evidence="1">
        <text>betaine aldehyde + NAD(+) + H2O = glycine betaine + NADH + 2 H(+)</text>
        <dbReference type="Rhea" id="RHEA:15305"/>
        <dbReference type="ChEBI" id="CHEBI:15377"/>
        <dbReference type="ChEBI" id="CHEBI:15378"/>
        <dbReference type="ChEBI" id="CHEBI:15710"/>
        <dbReference type="ChEBI" id="CHEBI:17750"/>
        <dbReference type="ChEBI" id="CHEBI:57540"/>
        <dbReference type="ChEBI" id="CHEBI:57945"/>
        <dbReference type="EC" id="1.2.1.8"/>
    </reaction>
    <physiologicalReaction direction="left-to-right" evidence="1">
        <dbReference type="Rhea" id="RHEA:15306"/>
    </physiologicalReaction>
</comment>
<comment type="cofactor">
    <cofactor evidence="1">
        <name>K(+)</name>
        <dbReference type="ChEBI" id="CHEBI:29103"/>
    </cofactor>
    <text evidence="1">Binds 2 potassium ions per subunit.</text>
</comment>
<comment type="pathway">
    <text evidence="1">Amine and polyamine biosynthesis; betaine biosynthesis via choline pathway; betaine from betaine aldehyde: step 1/1.</text>
</comment>
<comment type="subunit">
    <text evidence="1">Dimer of dimers.</text>
</comment>
<comment type="similarity">
    <text evidence="1">Belongs to the aldehyde dehydrogenase family.</text>
</comment>